<name>PGP_NITMS</name>
<organism>
    <name type="scientific">Nitrosopumilus maritimus (strain SCM1)</name>
    <dbReference type="NCBI Taxonomy" id="436308"/>
    <lineage>
        <taxon>Archaea</taxon>
        <taxon>Nitrososphaerota</taxon>
        <taxon>Nitrososphaeria</taxon>
        <taxon>Nitrosopumilales</taxon>
        <taxon>Nitrosopumilaceae</taxon>
        <taxon>Nitrosopumilus</taxon>
    </lineage>
</organism>
<reference key="1">
    <citation type="journal article" date="2010" name="Proc. Natl. Acad. Sci. U.S.A.">
        <title>Nitrosopumilus maritimus genome reveals unique mechanisms for nitrification and autotrophy in globally distributed marine crenarchaea.</title>
        <authorList>
            <person name="Walker C.B."/>
            <person name="de la Torre J.R."/>
            <person name="Klotz M.G."/>
            <person name="Urakawa H."/>
            <person name="Pinel N."/>
            <person name="Arp D.J."/>
            <person name="Brochier-Armanet C."/>
            <person name="Chain P.S."/>
            <person name="Chan P.P."/>
            <person name="Gollabgir A."/>
            <person name="Hemp J."/>
            <person name="Hugler M."/>
            <person name="Karr E.A."/>
            <person name="Konneke M."/>
            <person name="Shin M."/>
            <person name="Lawton T.J."/>
            <person name="Lowe T."/>
            <person name="Martens-Habbena W."/>
            <person name="Sayavedra-Soto L.A."/>
            <person name="Lang D."/>
            <person name="Sievert S.M."/>
            <person name="Rosenzweig A.C."/>
            <person name="Manning G."/>
            <person name="Stahl D.A."/>
        </authorList>
    </citation>
    <scope>NUCLEOTIDE SEQUENCE [LARGE SCALE GENOMIC DNA]</scope>
    <source>
        <strain>SCM1</strain>
    </source>
</reference>
<evidence type="ECO:0000255" key="1">
    <source>
        <dbReference type="HAMAP-Rule" id="MF_01419"/>
    </source>
</evidence>
<dbReference type="EC" id="3.1.3.18" evidence="1"/>
<dbReference type="EMBL" id="CP000866">
    <property type="protein sequence ID" value="ABX12581.1"/>
    <property type="molecule type" value="Genomic_DNA"/>
</dbReference>
<dbReference type="RefSeq" id="WP_012215068.1">
    <property type="nucleotide sequence ID" value="NC_010085.1"/>
</dbReference>
<dbReference type="SMR" id="A9A492"/>
<dbReference type="FunCoup" id="A9A492">
    <property type="interactions" value="16"/>
</dbReference>
<dbReference type="STRING" id="436308.Nmar_0685"/>
<dbReference type="EnsemblBacteria" id="ABX12581">
    <property type="protein sequence ID" value="ABX12581"/>
    <property type="gene ID" value="Nmar_0685"/>
</dbReference>
<dbReference type="GeneID" id="5773559"/>
<dbReference type="KEGG" id="nmr:Nmar_0685"/>
<dbReference type="eggNOG" id="arCOG01213">
    <property type="taxonomic scope" value="Archaea"/>
</dbReference>
<dbReference type="HOGENOM" id="CLU_044146_2_0_2"/>
<dbReference type="InParanoid" id="A9A492"/>
<dbReference type="OrthoDB" id="120822at2157"/>
<dbReference type="PhylomeDB" id="A9A492"/>
<dbReference type="Proteomes" id="UP000000792">
    <property type="component" value="Chromosome"/>
</dbReference>
<dbReference type="GO" id="GO:0005829">
    <property type="term" value="C:cytosol"/>
    <property type="evidence" value="ECO:0000318"/>
    <property type="project" value="GO_Central"/>
</dbReference>
<dbReference type="GO" id="GO:0000287">
    <property type="term" value="F:magnesium ion binding"/>
    <property type="evidence" value="ECO:0000318"/>
    <property type="project" value="GO_Central"/>
</dbReference>
<dbReference type="GO" id="GO:0016791">
    <property type="term" value="F:phosphatase activity"/>
    <property type="evidence" value="ECO:0000318"/>
    <property type="project" value="GO_Central"/>
</dbReference>
<dbReference type="GO" id="GO:0008967">
    <property type="term" value="F:phosphoglycolate phosphatase activity"/>
    <property type="evidence" value="ECO:0007669"/>
    <property type="project" value="UniProtKB-UniRule"/>
</dbReference>
<dbReference type="CDD" id="cd07514">
    <property type="entry name" value="HAD_Pase"/>
    <property type="match status" value="1"/>
</dbReference>
<dbReference type="Gene3D" id="3.90.1070.10">
    <property type="match status" value="1"/>
</dbReference>
<dbReference type="Gene3D" id="3.40.50.1000">
    <property type="entry name" value="HAD superfamily/HAD-like"/>
    <property type="match status" value="1"/>
</dbReference>
<dbReference type="HAMAP" id="MF_01419">
    <property type="entry name" value="GPH_hydrolase_arch"/>
    <property type="match status" value="1"/>
</dbReference>
<dbReference type="InterPro" id="IPR036412">
    <property type="entry name" value="HAD-like_sf"/>
</dbReference>
<dbReference type="InterPro" id="IPR006379">
    <property type="entry name" value="HAD-SF_hydro_IIB"/>
</dbReference>
<dbReference type="InterPro" id="IPR023214">
    <property type="entry name" value="HAD_sf"/>
</dbReference>
<dbReference type="InterPro" id="IPR006382">
    <property type="entry name" value="PGPase"/>
</dbReference>
<dbReference type="NCBIfam" id="TIGR01484">
    <property type="entry name" value="HAD-SF-IIB"/>
    <property type="match status" value="1"/>
</dbReference>
<dbReference type="NCBIfam" id="TIGR01487">
    <property type="entry name" value="Pglycolate_arch"/>
    <property type="match status" value="1"/>
</dbReference>
<dbReference type="NCBIfam" id="TIGR01482">
    <property type="entry name" value="SPP-subfamily"/>
    <property type="match status" value="1"/>
</dbReference>
<dbReference type="PANTHER" id="PTHR10000:SF8">
    <property type="entry name" value="HAD SUPERFAMILY HYDROLASE-LIKE, TYPE 3"/>
    <property type="match status" value="1"/>
</dbReference>
<dbReference type="PANTHER" id="PTHR10000">
    <property type="entry name" value="PHOSPHOSERINE PHOSPHATASE"/>
    <property type="match status" value="1"/>
</dbReference>
<dbReference type="Pfam" id="PF08282">
    <property type="entry name" value="Hydrolase_3"/>
    <property type="match status" value="2"/>
</dbReference>
<dbReference type="SUPFAM" id="SSF56784">
    <property type="entry name" value="HAD-like"/>
    <property type="match status" value="1"/>
</dbReference>
<feature type="chain" id="PRO_1000215252" description="Phosphoglycolate phosphatase">
    <location>
        <begin position="1"/>
        <end position="231"/>
    </location>
</feature>
<feature type="active site" description="Nucleophile" evidence="1">
    <location>
        <position position="9"/>
    </location>
</feature>
<feature type="binding site" evidence="1">
    <location>
        <position position="9"/>
    </location>
    <ligand>
        <name>Mg(2+)</name>
        <dbReference type="ChEBI" id="CHEBI:18420"/>
    </ligand>
</feature>
<feature type="binding site" evidence="1">
    <location>
        <position position="11"/>
    </location>
    <ligand>
        <name>Mg(2+)</name>
        <dbReference type="ChEBI" id="CHEBI:18420"/>
    </ligand>
</feature>
<feature type="binding site" evidence="1">
    <location>
        <position position="154"/>
    </location>
    <ligand>
        <name>substrate</name>
    </ligand>
</feature>
<feature type="binding site" evidence="1">
    <location>
        <position position="177"/>
    </location>
    <ligand>
        <name>Mg(2+)</name>
        <dbReference type="ChEBI" id="CHEBI:18420"/>
    </ligand>
</feature>
<feature type="binding site" evidence="1">
    <location>
        <position position="181"/>
    </location>
    <ligand>
        <name>Mg(2+)</name>
        <dbReference type="ChEBI" id="CHEBI:18420"/>
    </ligand>
</feature>
<comment type="function">
    <text evidence="1">Catalyzes the dephosphorylation of 2-phosphoglycolate.</text>
</comment>
<comment type="catalytic activity">
    <reaction evidence="1">
        <text>2-phosphoglycolate + H2O = glycolate + phosphate</text>
        <dbReference type="Rhea" id="RHEA:14369"/>
        <dbReference type="ChEBI" id="CHEBI:15377"/>
        <dbReference type="ChEBI" id="CHEBI:29805"/>
        <dbReference type="ChEBI" id="CHEBI:43474"/>
        <dbReference type="ChEBI" id="CHEBI:58033"/>
        <dbReference type="EC" id="3.1.3.18"/>
    </reaction>
</comment>
<comment type="cofactor">
    <cofactor evidence="1">
        <name>Mg(2+)</name>
        <dbReference type="ChEBI" id="CHEBI:18420"/>
    </cofactor>
</comment>
<comment type="similarity">
    <text evidence="1">Belongs to the archaeal SPP-like hydrolase family.</text>
</comment>
<gene>
    <name type="ordered locus">Nmar_0685</name>
</gene>
<accession>A9A492</accession>
<keyword id="KW-0119">Carbohydrate metabolism</keyword>
<keyword id="KW-0378">Hydrolase</keyword>
<keyword id="KW-0460">Magnesium</keyword>
<keyword id="KW-0479">Metal-binding</keyword>
<keyword id="KW-1185">Reference proteome</keyword>
<sequence>MKKRTFAVDIDGTITENGGGRIHLDALESLRRLVNMGHDVIFVTGRSSVEGFLLSVFGGTTKVSVGENGGCITLDSNDHILLGNLEECKNALNILKNNMENVEEKYVFPRMTEVVLQRTFDLDQARKILSENNIDVVLSDSQYAYHINSPGIDKGTGFTEIMKKFSISRDDVIAIGDSATDVPLFKVAKTSVALGNASDDVKSEATMTVSAHAGDGVLEALDKLAPILSEI</sequence>
<proteinExistence type="inferred from homology"/>
<protein>
    <recommendedName>
        <fullName evidence="1">Phosphoglycolate phosphatase</fullName>
        <shortName evidence="1">PGP</shortName>
        <shortName evidence="1">PGPase</shortName>
        <ecNumber evidence="1">3.1.3.18</ecNumber>
    </recommendedName>
</protein>